<reference key="1">
    <citation type="journal article" date="2006" name="Nat. Biotechnol.">
        <title>The genome and transcriptomes of the anti-tumor agent Clostridium novyi-NT.</title>
        <authorList>
            <person name="Bettegowda C."/>
            <person name="Huang X."/>
            <person name="Lin J."/>
            <person name="Cheong I."/>
            <person name="Kohli M."/>
            <person name="Szabo S.A."/>
            <person name="Zhang X."/>
            <person name="Diaz L.A. Jr."/>
            <person name="Velculescu V.E."/>
            <person name="Parmigiani G."/>
            <person name="Kinzler K.W."/>
            <person name="Vogelstein B."/>
            <person name="Zhou S."/>
        </authorList>
    </citation>
    <scope>NUCLEOTIDE SEQUENCE [LARGE SCALE GENOMIC DNA]</scope>
    <source>
        <strain>NT</strain>
    </source>
</reference>
<proteinExistence type="inferred from homology"/>
<name>Y2279_CLONN</name>
<accession>A0Q150</accession>
<sequence>MSINENTMEFDIQKNKDDLTRSILSEVNNSLKEKGYNPINQLVGYLISGDPTYITNYNGARALIRKLERDEILEEVLKAYLSIK</sequence>
<protein>
    <recommendedName>
        <fullName evidence="1">UPF0297 protein NT01CX_2279</fullName>
    </recommendedName>
</protein>
<feature type="chain" id="PRO_0000289299" description="UPF0297 protein NT01CX_2279">
    <location>
        <begin position="1"/>
        <end position="84"/>
    </location>
</feature>
<evidence type="ECO:0000255" key="1">
    <source>
        <dbReference type="HAMAP-Rule" id="MF_01507"/>
    </source>
</evidence>
<gene>
    <name type="ordered locus">NT01CX_2279</name>
</gene>
<keyword id="KW-1185">Reference proteome</keyword>
<dbReference type="EMBL" id="CP000382">
    <property type="protein sequence ID" value="ABK60815.1"/>
    <property type="molecule type" value="Genomic_DNA"/>
</dbReference>
<dbReference type="RefSeq" id="WP_011722348.1">
    <property type="nucleotide sequence ID" value="NC_008593.1"/>
</dbReference>
<dbReference type="SMR" id="A0Q150"/>
<dbReference type="STRING" id="386415.NT01CX_2279"/>
<dbReference type="KEGG" id="cno:NT01CX_2279"/>
<dbReference type="eggNOG" id="COG4472">
    <property type="taxonomic scope" value="Bacteria"/>
</dbReference>
<dbReference type="HOGENOM" id="CLU_162466_0_0_9"/>
<dbReference type="Proteomes" id="UP000008220">
    <property type="component" value="Chromosome"/>
</dbReference>
<dbReference type="HAMAP" id="MF_01507">
    <property type="entry name" value="UPF0297"/>
    <property type="match status" value="1"/>
</dbReference>
<dbReference type="InterPro" id="IPR009309">
    <property type="entry name" value="IreB"/>
</dbReference>
<dbReference type="NCBIfam" id="NF003997">
    <property type="entry name" value="PRK05473.1"/>
    <property type="match status" value="1"/>
</dbReference>
<dbReference type="PANTHER" id="PTHR40067">
    <property type="entry name" value="UPF0297 PROTEIN YRZL"/>
    <property type="match status" value="1"/>
</dbReference>
<dbReference type="PANTHER" id="PTHR40067:SF1">
    <property type="entry name" value="UPF0297 PROTEIN YRZL"/>
    <property type="match status" value="1"/>
</dbReference>
<dbReference type="Pfam" id="PF06135">
    <property type="entry name" value="IreB"/>
    <property type="match status" value="1"/>
</dbReference>
<dbReference type="PIRSF" id="PIRSF037258">
    <property type="entry name" value="DUF965_bac"/>
    <property type="match status" value="1"/>
</dbReference>
<comment type="similarity">
    <text evidence="1">Belongs to the UPF0297 family.</text>
</comment>
<organism>
    <name type="scientific">Clostridium novyi (strain NT)</name>
    <dbReference type="NCBI Taxonomy" id="386415"/>
    <lineage>
        <taxon>Bacteria</taxon>
        <taxon>Bacillati</taxon>
        <taxon>Bacillota</taxon>
        <taxon>Clostridia</taxon>
        <taxon>Eubacteriales</taxon>
        <taxon>Clostridiaceae</taxon>
        <taxon>Clostridium</taxon>
    </lineage>
</organism>